<evidence type="ECO:0000255" key="1">
    <source>
        <dbReference type="HAMAP-Rule" id="MF_01363"/>
    </source>
</evidence>
<evidence type="ECO:0000269" key="2">
    <source>
    </source>
</evidence>
<evidence type="ECO:0000305" key="3"/>
<comment type="function">
    <text evidence="1">This protein binds to 23S rRNA.</text>
</comment>
<comment type="subunit">
    <text evidence="1">Part of the 50S ribosomal subunit.</text>
</comment>
<comment type="subcellular location">
    <subcellularLocation>
        <location>Plastid</location>
        <location>Chloroplast</location>
    </subcellularLocation>
</comment>
<comment type="RNA editing">
    <location>
        <position position="31" evidence="2"/>
    </location>
    <location>
        <position position="100" evidence="2"/>
    </location>
    <text>The nonsense codon at position 100 is modified to a sense codon.</text>
</comment>
<comment type="similarity">
    <text evidence="1">Belongs to the bacterial ribosomal protein bL21 family.</text>
</comment>
<organism>
    <name type="scientific">Adiantum capillus-veneris</name>
    <name type="common">Maidenhair fern</name>
    <dbReference type="NCBI Taxonomy" id="13818"/>
    <lineage>
        <taxon>Eukaryota</taxon>
        <taxon>Viridiplantae</taxon>
        <taxon>Streptophyta</taxon>
        <taxon>Embryophyta</taxon>
        <taxon>Tracheophyta</taxon>
        <taxon>Polypodiopsida</taxon>
        <taxon>Polypodiidae</taxon>
        <taxon>Polypodiales</taxon>
        <taxon>Pteridineae</taxon>
        <taxon>Pteridaceae</taxon>
        <taxon>Vittarioideae</taxon>
        <taxon>Adiantum</taxon>
    </lineage>
</organism>
<reference key="1">
    <citation type="journal article" date="2003" name="DNA Res.">
        <title>Complete nucleotide sequence of the chloroplast genome from a leptosporangiate fern, Adiantum capillus-veneris L.</title>
        <authorList>
            <person name="Wolf P.G."/>
            <person name="Rowe C.A."/>
            <person name="Sinclair R.B."/>
            <person name="Hasebe M."/>
        </authorList>
    </citation>
    <scope>NUCLEOTIDE SEQUENCE [LARGE SCALE GENOMIC DNA]</scope>
</reference>
<reference key="2">
    <citation type="journal article" date="2004" name="Gene">
        <title>High levels of RNA editing in a vascular plant chloroplast genome: analysis of transcripts from the fern Adiantum capillus-veneris.</title>
        <authorList>
            <person name="Wolf P.G."/>
            <person name="Rowe C.A."/>
            <person name="Hasebe M."/>
        </authorList>
    </citation>
    <scope>NUCLEOTIDE SEQUENCE [GENOMIC DNA]</scope>
    <scope>RNA EDITING</scope>
    <source>
        <tissue>Frond</tissue>
    </source>
</reference>
<gene>
    <name evidence="1" type="primary">rpl21</name>
</gene>
<name>RK21_ADICA</name>
<sequence length="127" mass="14389">MEKWKERVRIGGYAIIDIGGKQLRVQPGRFYDVRHFPSNLNTRGSDTKVSMGRVLLIRDGSKIDIGSPWLANAVVKGRILHNCFEDKLVIKKIFSKRKTRGSRGCRGSIIRFAIDSIHFNCSNATNK</sequence>
<geneLocation type="chloroplast"/>
<keyword id="KW-0150">Chloroplast</keyword>
<keyword id="KW-0934">Plastid</keyword>
<keyword id="KW-0687">Ribonucleoprotein</keyword>
<keyword id="KW-0689">Ribosomal protein</keyword>
<keyword id="KW-0691">RNA editing</keyword>
<keyword id="KW-0694">RNA-binding</keyword>
<keyword id="KW-0699">rRNA-binding</keyword>
<proteinExistence type="evidence at transcript level"/>
<accession>Q85FH8</accession>
<protein>
    <recommendedName>
        <fullName evidence="1">Large ribosomal subunit protein bL21c</fullName>
    </recommendedName>
    <alternativeName>
        <fullName evidence="3">50S ribosomal protein L21, chloroplastic</fullName>
    </alternativeName>
</protein>
<feature type="chain" id="PRO_0000181021" description="Large ribosomal subunit protein bL21c">
    <location>
        <begin position="1"/>
        <end position="127"/>
    </location>
</feature>
<dbReference type="EMBL" id="AY178864">
    <property type="protein sequence ID" value="AAP29438.2"/>
    <property type="molecule type" value="Genomic_DNA"/>
</dbReference>
<dbReference type="RefSeq" id="NP_848107.2">
    <property type="nucleotide sequence ID" value="NC_004766.1"/>
</dbReference>
<dbReference type="SMR" id="Q85FH8"/>
<dbReference type="GeneID" id="807375"/>
<dbReference type="GO" id="GO:0009507">
    <property type="term" value="C:chloroplast"/>
    <property type="evidence" value="ECO:0007669"/>
    <property type="project" value="UniProtKB-SubCell"/>
</dbReference>
<dbReference type="GO" id="GO:1990904">
    <property type="term" value="C:ribonucleoprotein complex"/>
    <property type="evidence" value="ECO:0007669"/>
    <property type="project" value="UniProtKB-KW"/>
</dbReference>
<dbReference type="GO" id="GO:0005840">
    <property type="term" value="C:ribosome"/>
    <property type="evidence" value="ECO:0007669"/>
    <property type="project" value="UniProtKB-KW"/>
</dbReference>
<dbReference type="GO" id="GO:0019843">
    <property type="term" value="F:rRNA binding"/>
    <property type="evidence" value="ECO:0007669"/>
    <property type="project" value="UniProtKB-UniRule"/>
</dbReference>
<dbReference type="GO" id="GO:0003735">
    <property type="term" value="F:structural constituent of ribosome"/>
    <property type="evidence" value="ECO:0007669"/>
    <property type="project" value="InterPro"/>
</dbReference>
<dbReference type="GO" id="GO:0006412">
    <property type="term" value="P:translation"/>
    <property type="evidence" value="ECO:0007669"/>
    <property type="project" value="UniProtKB-UniRule"/>
</dbReference>
<dbReference type="HAMAP" id="MF_01363">
    <property type="entry name" value="Ribosomal_bL21"/>
    <property type="match status" value="1"/>
</dbReference>
<dbReference type="InterPro" id="IPR028909">
    <property type="entry name" value="bL21-like"/>
</dbReference>
<dbReference type="InterPro" id="IPR036164">
    <property type="entry name" value="bL21-like_sf"/>
</dbReference>
<dbReference type="InterPro" id="IPR001787">
    <property type="entry name" value="Ribosomal_bL21"/>
</dbReference>
<dbReference type="NCBIfam" id="TIGR00061">
    <property type="entry name" value="L21"/>
    <property type="match status" value="1"/>
</dbReference>
<dbReference type="Pfam" id="PF00829">
    <property type="entry name" value="Ribosomal_L21p"/>
    <property type="match status" value="1"/>
</dbReference>
<dbReference type="SUPFAM" id="SSF141091">
    <property type="entry name" value="L21p-like"/>
    <property type="match status" value="1"/>
</dbReference>